<sequence>MSENGFLFRFRDGQTYMDTWPERKELAPMFPEQRVIKATKFAVKVMPAVAVISVLTQMVFNNTAGLPQAIIIALFAISMPLQGFWWLGNRANTKLPPALASWYRELYQKIIESGAALEPMKSQPRYKELANILNKAFKQLDKTALERWF</sequence>
<gene>
    <name type="ordered locus">VF_0838</name>
</gene>
<protein>
    <recommendedName>
        <fullName evidence="1">UPF0208 membrane protein VF_0838</fullName>
    </recommendedName>
</protein>
<keyword id="KW-0997">Cell inner membrane</keyword>
<keyword id="KW-1003">Cell membrane</keyword>
<keyword id="KW-0472">Membrane</keyword>
<keyword id="KW-1185">Reference proteome</keyword>
<keyword id="KW-0812">Transmembrane</keyword>
<keyword id="KW-1133">Transmembrane helix</keyword>
<comment type="subcellular location">
    <subcellularLocation>
        <location evidence="1">Cell inner membrane</location>
        <topology evidence="1">Multi-pass membrane protein</topology>
    </subcellularLocation>
</comment>
<comment type="similarity">
    <text evidence="1">Belongs to the UPF0208 family.</text>
</comment>
<feature type="chain" id="PRO_1000064984" description="UPF0208 membrane protein VF_0838">
    <location>
        <begin position="1"/>
        <end position="149"/>
    </location>
</feature>
<feature type="transmembrane region" description="Helical" evidence="1">
    <location>
        <begin position="41"/>
        <end position="61"/>
    </location>
</feature>
<feature type="transmembrane region" description="Helical" evidence="1">
    <location>
        <begin position="69"/>
        <end position="89"/>
    </location>
</feature>
<accession>Q5E6L3</accession>
<reference key="1">
    <citation type="journal article" date="2005" name="Proc. Natl. Acad. Sci. U.S.A.">
        <title>Complete genome sequence of Vibrio fischeri: a symbiotic bacterium with pathogenic congeners.</title>
        <authorList>
            <person name="Ruby E.G."/>
            <person name="Urbanowski M."/>
            <person name="Campbell J."/>
            <person name="Dunn A."/>
            <person name="Faini M."/>
            <person name="Gunsalus R."/>
            <person name="Lostroh P."/>
            <person name="Lupp C."/>
            <person name="McCann J."/>
            <person name="Millikan D."/>
            <person name="Schaefer A."/>
            <person name="Stabb E."/>
            <person name="Stevens A."/>
            <person name="Visick K."/>
            <person name="Whistler C."/>
            <person name="Greenberg E.P."/>
        </authorList>
    </citation>
    <scope>NUCLEOTIDE SEQUENCE [LARGE SCALE GENOMIC DNA]</scope>
    <source>
        <strain>ATCC 700601 / ES114</strain>
    </source>
</reference>
<organism>
    <name type="scientific">Aliivibrio fischeri (strain ATCC 700601 / ES114)</name>
    <name type="common">Vibrio fischeri</name>
    <dbReference type="NCBI Taxonomy" id="312309"/>
    <lineage>
        <taxon>Bacteria</taxon>
        <taxon>Pseudomonadati</taxon>
        <taxon>Pseudomonadota</taxon>
        <taxon>Gammaproteobacteria</taxon>
        <taxon>Vibrionales</taxon>
        <taxon>Vibrionaceae</taxon>
        <taxon>Aliivibrio</taxon>
    </lineage>
</organism>
<dbReference type="EMBL" id="CP000020">
    <property type="protein sequence ID" value="AAW85333.1"/>
    <property type="molecule type" value="Genomic_DNA"/>
</dbReference>
<dbReference type="RefSeq" id="YP_204221.1">
    <property type="nucleotide sequence ID" value="NC_006840.2"/>
</dbReference>
<dbReference type="STRING" id="312309.VF_0838"/>
<dbReference type="EnsemblBacteria" id="AAW85333">
    <property type="protein sequence ID" value="AAW85333"/>
    <property type="gene ID" value="VF_0838"/>
</dbReference>
<dbReference type="GeneID" id="54163506"/>
<dbReference type="KEGG" id="vfi:VF_0838"/>
<dbReference type="PATRIC" id="fig|312309.11.peg.831"/>
<dbReference type="eggNOG" id="COG3092">
    <property type="taxonomic scope" value="Bacteria"/>
</dbReference>
<dbReference type="HOGENOM" id="CLU_128746_0_0_6"/>
<dbReference type="OrthoDB" id="7066670at2"/>
<dbReference type="Proteomes" id="UP000000537">
    <property type="component" value="Chromosome I"/>
</dbReference>
<dbReference type="GO" id="GO:0005886">
    <property type="term" value="C:plasma membrane"/>
    <property type="evidence" value="ECO:0007669"/>
    <property type="project" value="UniProtKB-SubCell"/>
</dbReference>
<dbReference type="HAMAP" id="MF_01101">
    <property type="entry name" value="UPF0208"/>
    <property type="match status" value="1"/>
</dbReference>
<dbReference type="InterPro" id="IPR007334">
    <property type="entry name" value="UPF0208"/>
</dbReference>
<dbReference type="NCBIfam" id="NF002493">
    <property type="entry name" value="PRK01816.1"/>
    <property type="match status" value="1"/>
</dbReference>
<dbReference type="Pfam" id="PF04217">
    <property type="entry name" value="DUF412"/>
    <property type="match status" value="1"/>
</dbReference>
<proteinExistence type="inferred from homology"/>
<name>Y838_ALIF1</name>
<evidence type="ECO:0000255" key="1">
    <source>
        <dbReference type="HAMAP-Rule" id="MF_01101"/>
    </source>
</evidence>